<keyword id="KW-0169">Cobalamin biosynthesis</keyword>
<keyword id="KW-0489">Methyltransferase</keyword>
<keyword id="KW-0949">S-adenosyl-L-methionine</keyword>
<keyword id="KW-0808">Transferase</keyword>
<organism>
    <name type="scientific">Clostridium kluyveri (strain NBRC 12016)</name>
    <dbReference type="NCBI Taxonomy" id="583346"/>
    <lineage>
        <taxon>Bacteria</taxon>
        <taxon>Bacillati</taxon>
        <taxon>Bacillota</taxon>
        <taxon>Clostridia</taxon>
        <taxon>Eubacteriales</taxon>
        <taxon>Clostridiaceae</taxon>
        <taxon>Clostridium</taxon>
    </lineage>
</organism>
<dbReference type="EC" id="2.1.1.195" evidence="1"/>
<dbReference type="EMBL" id="AP009049">
    <property type="protein sequence ID" value="BAH05697.1"/>
    <property type="molecule type" value="Genomic_DNA"/>
</dbReference>
<dbReference type="RefSeq" id="WP_011989292.1">
    <property type="nucleotide sequence ID" value="NC_011837.1"/>
</dbReference>
<dbReference type="SMR" id="B9DZM2"/>
<dbReference type="KEGG" id="ckr:CKR_0646"/>
<dbReference type="HOGENOM" id="CLU_041273_1_0_9"/>
<dbReference type="UniPathway" id="UPA00148">
    <property type="reaction ID" value="UER00227"/>
</dbReference>
<dbReference type="Proteomes" id="UP000007969">
    <property type="component" value="Chromosome"/>
</dbReference>
<dbReference type="GO" id="GO:0043780">
    <property type="term" value="F:cobalt-precorrin-5B C1-methyltransferase activity"/>
    <property type="evidence" value="ECO:0007669"/>
    <property type="project" value="RHEA"/>
</dbReference>
<dbReference type="GO" id="GO:0019251">
    <property type="term" value="P:anaerobic cobalamin biosynthetic process"/>
    <property type="evidence" value="ECO:0007669"/>
    <property type="project" value="UniProtKB-UniRule"/>
</dbReference>
<dbReference type="GO" id="GO:0032259">
    <property type="term" value="P:methylation"/>
    <property type="evidence" value="ECO:0007669"/>
    <property type="project" value="UniProtKB-KW"/>
</dbReference>
<dbReference type="Gene3D" id="3.30.2110.10">
    <property type="entry name" value="CbiD-like"/>
    <property type="match status" value="1"/>
</dbReference>
<dbReference type="HAMAP" id="MF_00787">
    <property type="entry name" value="CbiD"/>
    <property type="match status" value="1"/>
</dbReference>
<dbReference type="InterPro" id="IPR002748">
    <property type="entry name" value="CbiD"/>
</dbReference>
<dbReference type="InterPro" id="IPR036074">
    <property type="entry name" value="CbiD_sf"/>
</dbReference>
<dbReference type="NCBIfam" id="TIGR00312">
    <property type="entry name" value="cbiD"/>
    <property type="match status" value="1"/>
</dbReference>
<dbReference type="PANTHER" id="PTHR35863">
    <property type="entry name" value="COBALT-PRECORRIN-5B C(1)-METHYLTRANSFERASE"/>
    <property type="match status" value="1"/>
</dbReference>
<dbReference type="PANTHER" id="PTHR35863:SF1">
    <property type="entry name" value="COBALT-PRECORRIN-5B C(1)-METHYLTRANSFERASE"/>
    <property type="match status" value="1"/>
</dbReference>
<dbReference type="Pfam" id="PF01888">
    <property type="entry name" value="CbiD"/>
    <property type="match status" value="1"/>
</dbReference>
<dbReference type="PIRSF" id="PIRSF026782">
    <property type="entry name" value="CbiD"/>
    <property type="match status" value="1"/>
</dbReference>
<dbReference type="SUPFAM" id="SSF111342">
    <property type="entry name" value="CbiD-like"/>
    <property type="match status" value="1"/>
</dbReference>
<proteinExistence type="inferred from homology"/>
<feature type="chain" id="PRO_1000148478" description="Cobalt-precorrin-5B C(1)-methyltransferase">
    <location>
        <begin position="1"/>
        <end position="365"/>
    </location>
</feature>
<sequence>MFDLYINCGGKKLRCGYTTGSCAAAAAKAAAKMLYSQENLEHISINTPKNVELDLHIESVKKGSDYVECCVIKDGGDDPDVTNGIEIWARAEKSEKEYTLKAGIGIGIVKGEGLYVKKGDFAINPVPRIMIEKEVRKVLPQGKGVTITIFVPEGEKIAKKTFNPRLNIVGGISILGTTGIVVPMSEEALKESVKLEISQKVASGYKDLILLFGNMGEDKARELGMDIKKSVIMSNYVGFALECCVENKIEKILIVGHIGKLSKIAAGCFNTHSRVCDVRLEVMALELALMGADKKIVEAVYNEKTTEGAVKIISEEYKDIYERIGYKIKKRIEDFTYGALKAEVIMYCMASGILWDGRSKIDENN</sequence>
<reference key="1">
    <citation type="submission" date="2005-09" db="EMBL/GenBank/DDBJ databases">
        <title>Complete genome sequence of Clostridium kluyveri and comparative genomics of Clostridia species.</title>
        <authorList>
            <person name="Inui M."/>
            <person name="Nonaka H."/>
            <person name="Shinoda Y."/>
            <person name="Ikenaga Y."/>
            <person name="Abe M."/>
            <person name="Naito K."/>
            <person name="Vertes A.A."/>
            <person name="Yukawa H."/>
        </authorList>
    </citation>
    <scope>NUCLEOTIDE SEQUENCE [LARGE SCALE GENOMIC DNA]</scope>
    <source>
        <strain>NBRC 12016</strain>
    </source>
</reference>
<protein>
    <recommendedName>
        <fullName evidence="1">Cobalt-precorrin-5B C(1)-methyltransferase</fullName>
        <ecNumber evidence="1">2.1.1.195</ecNumber>
    </recommendedName>
    <alternativeName>
        <fullName evidence="1">Cobalt-precorrin-6A synthase</fullName>
    </alternativeName>
</protein>
<comment type="function">
    <text evidence="1">Catalyzes the methylation of C-1 in cobalt-precorrin-5B to form cobalt-precorrin-6A.</text>
</comment>
<comment type="catalytic activity">
    <reaction evidence="1">
        <text>Co-precorrin-5B + S-adenosyl-L-methionine = Co-precorrin-6A + S-adenosyl-L-homocysteine</text>
        <dbReference type="Rhea" id="RHEA:26285"/>
        <dbReference type="ChEBI" id="CHEBI:57856"/>
        <dbReference type="ChEBI" id="CHEBI:59789"/>
        <dbReference type="ChEBI" id="CHEBI:60063"/>
        <dbReference type="ChEBI" id="CHEBI:60064"/>
        <dbReference type="EC" id="2.1.1.195"/>
    </reaction>
</comment>
<comment type="pathway">
    <text evidence="1">Cofactor biosynthesis; adenosylcobalamin biosynthesis; cob(II)yrinate a,c-diamide from sirohydrochlorin (anaerobic route): step 6/10.</text>
</comment>
<comment type="similarity">
    <text evidence="1">Belongs to the CbiD family.</text>
</comment>
<accession>B9DZM2</accession>
<name>CBID_CLOK1</name>
<gene>
    <name evidence="1" type="primary">cbiD</name>
    <name type="ordered locus">CKR_0646</name>
</gene>
<evidence type="ECO:0000255" key="1">
    <source>
        <dbReference type="HAMAP-Rule" id="MF_00787"/>
    </source>
</evidence>